<feature type="chain" id="PRO_0000123677" description="Isoprenyl transferase">
    <location>
        <begin position="1"/>
        <end position="256"/>
    </location>
</feature>
<feature type="active site" evidence="1">
    <location>
        <position position="33"/>
    </location>
</feature>
<feature type="active site" description="Proton acceptor" evidence="1">
    <location>
        <position position="81"/>
    </location>
</feature>
<feature type="binding site" evidence="1">
    <location>
        <position position="33"/>
    </location>
    <ligand>
        <name>Mg(2+)</name>
        <dbReference type="ChEBI" id="CHEBI:18420"/>
    </ligand>
</feature>
<feature type="binding site" evidence="1">
    <location>
        <begin position="34"/>
        <end position="37"/>
    </location>
    <ligand>
        <name>substrate</name>
    </ligand>
</feature>
<feature type="binding site" evidence="1">
    <location>
        <position position="38"/>
    </location>
    <ligand>
        <name>substrate</name>
    </ligand>
</feature>
<feature type="binding site" evidence="1">
    <location>
        <position position="46"/>
    </location>
    <ligand>
        <name>substrate</name>
    </ligand>
</feature>
<feature type="binding site" evidence="1">
    <location>
        <position position="50"/>
    </location>
    <ligand>
        <name>substrate</name>
    </ligand>
</feature>
<feature type="binding site" evidence="1">
    <location>
        <begin position="78"/>
        <end position="80"/>
    </location>
    <ligand>
        <name>substrate</name>
    </ligand>
</feature>
<feature type="binding site" evidence="1">
    <location>
        <position position="82"/>
    </location>
    <ligand>
        <name>substrate</name>
    </ligand>
</feature>
<feature type="binding site" evidence="1">
    <location>
        <position position="84"/>
    </location>
    <ligand>
        <name>substrate</name>
    </ligand>
</feature>
<feature type="binding site" evidence="1">
    <location>
        <position position="201"/>
    </location>
    <ligand>
        <name>substrate</name>
    </ligand>
</feature>
<feature type="binding site" evidence="1">
    <location>
        <begin position="207"/>
        <end position="209"/>
    </location>
    <ligand>
        <name>substrate</name>
    </ligand>
</feature>
<feature type="binding site" evidence="1">
    <location>
        <position position="220"/>
    </location>
    <ligand>
        <name>Mg(2+)</name>
        <dbReference type="ChEBI" id="CHEBI:18420"/>
    </ligand>
</feature>
<gene>
    <name evidence="1" type="primary">uppS</name>
    <name type="ordered locus">SE_0936</name>
</gene>
<accession>Q8CPG7</accession>
<protein>
    <recommendedName>
        <fullName evidence="1">Isoprenyl transferase</fullName>
        <ecNumber evidence="1">2.5.1.-</ecNumber>
    </recommendedName>
</protein>
<proteinExistence type="inferred from homology"/>
<keyword id="KW-0460">Magnesium</keyword>
<keyword id="KW-0479">Metal-binding</keyword>
<keyword id="KW-0808">Transferase</keyword>
<evidence type="ECO:0000255" key="1">
    <source>
        <dbReference type="HAMAP-Rule" id="MF_01139"/>
    </source>
</evidence>
<sequence>MFKKLKNKNKTETNHNNDLDIHNIPEHVAIIMDGNGRWAKKRKMPRIKGHYEGMQTIKKITREASDIGIKYLTLYAFSTENWSRPESEVNYIMNLPVNFLKTFLPELIEKNVKIETIGFYEGLPQSTIDAIDFAKAKTQHNTGLTLVFAINYGGRAEIIQSMKAIYNELQLNGQGSEVIDEALIKRHLMTHSYPDPDLLIRTSGEQRISNFLIWQASYSEFIFNEKLWPDFDEKELRECLKIYQSRQRRFGGLSEE</sequence>
<name>ISPT_STAES</name>
<reference key="1">
    <citation type="journal article" date="2003" name="Mol. Microbiol.">
        <title>Genome-based analysis of virulence genes in a non-biofilm-forming Staphylococcus epidermidis strain (ATCC 12228).</title>
        <authorList>
            <person name="Zhang Y.-Q."/>
            <person name="Ren S.-X."/>
            <person name="Li H.-L."/>
            <person name="Wang Y.-X."/>
            <person name="Fu G."/>
            <person name="Yang J."/>
            <person name="Qin Z.-Q."/>
            <person name="Miao Y.-G."/>
            <person name="Wang W.-Y."/>
            <person name="Chen R.-S."/>
            <person name="Shen Y."/>
            <person name="Chen Z."/>
            <person name="Yuan Z.-H."/>
            <person name="Zhao G.-P."/>
            <person name="Qu D."/>
            <person name="Danchin A."/>
            <person name="Wen Y.-M."/>
        </authorList>
    </citation>
    <scope>NUCLEOTIDE SEQUENCE [LARGE SCALE GENOMIC DNA]</scope>
    <source>
        <strain>ATCC 12228 / FDA PCI 1200</strain>
    </source>
</reference>
<organism>
    <name type="scientific">Staphylococcus epidermidis (strain ATCC 12228 / FDA PCI 1200)</name>
    <dbReference type="NCBI Taxonomy" id="176280"/>
    <lineage>
        <taxon>Bacteria</taxon>
        <taxon>Bacillati</taxon>
        <taxon>Bacillota</taxon>
        <taxon>Bacilli</taxon>
        <taxon>Bacillales</taxon>
        <taxon>Staphylococcaceae</taxon>
        <taxon>Staphylococcus</taxon>
    </lineage>
</organism>
<comment type="function">
    <text evidence="1">Catalyzes the condensation of isopentenyl diphosphate (IPP) with allylic pyrophosphates generating different type of terpenoids.</text>
</comment>
<comment type="cofactor">
    <cofactor evidence="1">
        <name>Mg(2+)</name>
        <dbReference type="ChEBI" id="CHEBI:18420"/>
    </cofactor>
    <text evidence="1">Binds 2 magnesium ions per subunit.</text>
</comment>
<comment type="subunit">
    <text evidence="1">Homodimer.</text>
</comment>
<comment type="similarity">
    <text evidence="1">Belongs to the UPP synthase family.</text>
</comment>
<dbReference type="EC" id="2.5.1.-" evidence="1"/>
<dbReference type="EMBL" id="AE015929">
    <property type="protein sequence ID" value="AAO04533.1"/>
    <property type="molecule type" value="Genomic_DNA"/>
</dbReference>
<dbReference type="RefSeq" id="NP_764491.1">
    <property type="nucleotide sequence ID" value="NC_004461.1"/>
</dbReference>
<dbReference type="RefSeq" id="WP_001832561.1">
    <property type="nucleotide sequence ID" value="NZ_WBME01000001.1"/>
</dbReference>
<dbReference type="SMR" id="Q8CPG7"/>
<dbReference type="KEGG" id="sep:SE_0936"/>
<dbReference type="PATRIC" id="fig|176280.10.peg.911"/>
<dbReference type="eggNOG" id="COG0020">
    <property type="taxonomic scope" value="Bacteria"/>
</dbReference>
<dbReference type="HOGENOM" id="CLU_038505_1_1_9"/>
<dbReference type="OrthoDB" id="4191603at2"/>
<dbReference type="Proteomes" id="UP000001411">
    <property type="component" value="Chromosome"/>
</dbReference>
<dbReference type="GO" id="GO:0005829">
    <property type="term" value="C:cytosol"/>
    <property type="evidence" value="ECO:0007669"/>
    <property type="project" value="TreeGrafter"/>
</dbReference>
<dbReference type="GO" id="GO:0008834">
    <property type="term" value="F:ditrans,polycis-undecaprenyl-diphosphate synthase [(2E,6E)-farnesyl-diphosphate specific] activity"/>
    <property type="evidence" value="ECO:0007669"/>
    <property type="project" value="TreeGrafter"/>
</dbReference>
<dbReference type="GO" id="GO:0000287">
    <property type="term" value="F:magnesium ion binding"/>
    <property type="evidence" value="ECO:0007669"/>
    <property type="project" value="UniProtKB-UniRule"/>
</dbReference>
<dbReference type="GO" id="GO:0030145">
    <property type="term" value="F:manganese ion binding"/>
    <property type="evidence" value="ECO:0007669"/>
    <property type="project" value="TreeGrafter"/>
</dbReference>
<dbReference type="GO" id="GO:0016094">
    <property type="term" value="P:polyprenol biosynthetic process"/>
    <property type="evidence" value="ECO:0007669"/>
    <property type="project" value="TreeGrafter"/>
</dbReference>
<dbReference type="CDD" id="cd00475">
    <property type="entry name" value="Cis_IPPS"/>
    <property type="match status" value="1"/>
</dbReference>
<dbReference type="FunFam" id="3.40.1180.10:FF:000001">
    <property type="entry name" value="(2E,6E)-farnesyl-diphosphate-specific ditrans,polycis-undecaprenyl-diphosphate synthase"/>
    <property type="match status" value="1"/>
</dbReference>
<dbReference type="Gene3D" id="3.40.1180.10">
    <property type="entry name" value="Decaprenyl diphosphate synthase-like"/>
    <property type="match status" value="1"/>
</dbReference>
<dbReference type="HAMAP" id="MF_01139">
    <property type="entry name" value="ISPT"/>
    <property type="match status" value="1"/>
</dbReference>
<dbReference type="InterPro" id="IPR001441">
    <property type="entry name" value="UPP_synth-like"/>
</dbReference>
<dbReference type="InterPro" id="IPR018520">
    <property type="entry name" value="UPP_synth-like_CS"/>
</dbReference>
<dbReference type="InterPro" id="IPR036424">
    <property type="entry name" value="UPP_synth-like_sf"/>
</dbReference>
<dbReference type="NCBIfam" id="NF011405">
    <property type="entry name" value="PRK14830.1"/>
    <property type="match status" value="1"/>
</dbReference>
<dbReference type="NCBIfam" id="TIGR00055">
    <property type="entry name" value="uppS"/>
    <property type="match status" value="1"/>
</dbReference>
<dbReference type="PANTHER" id="PTHR10291:SF0">
    <property type="entry name" value="DEHYDRODOLICHYL DIPHOSPHATE SYNTHASE 2"/>
    <property type="match status" value="1"/>
</dbReference>
<dbReference type="PANTHER" id="PTHR10291">
    <property type="entry name" value="DEHYDRODOLICHYL DIPHOSPHATE SYNTHASE FAMILY MEMBER"/>
    <property type="match status" value="1"/>
</dbReference>
<dbReference type="Pfam" id="PF01255">
    <property type="entry name" value="Prenyltransf"/>
    <property type="match status" value="1"/>
</dbReference>
<dbReference type="SUPFAM" id="SSF64005">
    <property type="entry name" value="Undecaprenyl diphosphate synthase"/>
    <property type="match status" value="1"/>
</dbReference>
<dbReference type="PROSITE" id="PS01066">
    <property type="entry name" value="UPP_SYNTHASE"/>
    <property type="match status" value="1"/>
</dbReference>